<keyword id="KW-0665">Pyrimidine biosynthesis</keyword>
<keyword id="KW-1185">Reference proteome</keyword>
<keyword id="KW-0808">Transferase</keyword>
<organism>
    <name type="scientific">Mycobacterium tuberculosis (strain ATCC 25618 / H37Rv)</name>
    <dbReference type="NCBI Taxonomy" id="83332"/>
    <lineage>
        <taxon>Bacteria</taxon>
        <taxon>Bacillati</taxon>
        <taxon>Actinomycetota</taxon>
        <taxon>Actinomycetes</taxon>
        <taxon>Mycobacteriales</taxon>
        <taxon>Mycobacteriaceae</taxon>
        <taxon>Mycobacterium</taxon>
        <taxon>Mycobacterium tuberculosis complex</taxon>
    </lineage>
</organism>
<dbReference type="EC" id="2.1.3.2" evidence="1"/>
<dbReference type="EMBL" id="AL123456">
    <property type="protein sequence ID" value="CCP44139.1"/>
    <property type="molecule type" value="Genomic_DNA"/>
</dbReference>
<dbReference type="PIR" id="A70959">
    <property type="entry name" value="A70959"/>
</dbReference>
<dbReference type="RefSeq" id="NP_215896.1">
    <property type="nucleotide sequence ID" value="NC_000962.3"/>
</dbReference>
<dbReference type="RefSeq" id="WP_003407200.1">
    <property type="nucleotide sequence ID" value="NZ_NVQJ01000050.1"/>
</dbReference>
<dbReference type="SMR" id="P9WIT7"/>
<dbReference type="FunCoup" id="P9WIT7">
    <property type="interactions" value="386"/>
</dbReference>
<dbReference type="STRING" id="83332.Rv1380"/>
<dbReference type="PaxDb" id="83332-Rv1380"/>
<dbReference type="DNASU" id="886771"/>
<dbReference type="GeneID" id="886771"/>
<dbReference type="KEGG" id="mtu:Rv1380"/>
<dbReference type="KEGG" id="mtv:RVBD_1380"/>
<dbReference type="TubercuList" id="Rv1380"/>
<dbReference type="eggNOG" id="COG0540">
    <property type="taxonomic scope" value="Bacteria"/>
</dbReference>
<dbReference type="InParanoid" id="P9WIT7"/>
<dbReference type="OrthoDB" id="9774690at2"/>
<dbReference type="PhylomeDB" id="P9WIT7"/>
<dbReference type="UniPathway" id="UPA00070">
    <property type="reaction ID" value="UER00116"/>
</dbReference>
<dbReference type="Proteomes" id="UP000001584">
    <property type="component" value="Chromosome"/>
</dbReference>
<dbReference type="GO" id="GO:0005829">
    <property type="term" value="C:cytosol"/>
    <property type="evidence" value="ECO:0007005"/>
    <property type="project" value="MTBBASE"/>
</dbReference>
<dbReference type="GO" id="GO:0009274">
    <property type="term" value="C:peptidoglycan-based cell wall"/>
    <property type="evidence" value="ECO:0007005"/>
    <property type="project" value="MTBBASE"/>
</dbReference>
<dbReference type="GO" id="GO:0005886">
    <property type="term" value="C:plasma membrane"/>
    <property type="evidence" value="ECO:0007005"/>
    <property type="project" value="MTBBASE"/>
</dbReference>
<dbReference type="GO" id="GO:0016597">
    <property type="term" value="F:amino acid binding"/>
    <property type="evidence" value="ECO:0007669"/>
    <property type="project" value="InterPro"/>
</dbReference>
<dbReference type="GO" id="GO:0004070">
    <property type="term" value="F:aspartate carbamoyltransferase activity"/>
    <property type="evidence" value="ECO:0007669"/>
    <property type="project" value="UniProtKB-UniRule"/>
</dbReference>
<dbReference type="GO" id="GO:0006207">
    <property type="term" value="P:'de novo' pyrimidine nucleobase biosynthetic process"/>
    <property type="evidence" value="ECO:0007669"/>
    <property type="project" value="InterPro"/>
</dbReference>
<dbReference type="GO" id="GO:0044205">
    <property type="term" value="P:'de novo' UMP biosynthetic process"/>
    <property type="evidence" value="ECO:0007669"/>
    <property type="project" value="UniProtKB-UniRule"/>
</dbReference>
<dbReference type="GO" id="GO:0006520">
    <property type="term" value="P:amino acid metabolic process"/>
    <property type="evidence" value="ECO:0007669"/>
    <property type="project" value="InterPro"/>
</dbReference>
<dbReference type="FunFam" id="3.40.50.1370:FF:000007">
    <property type="entry name" value="Aspartate carbamoyltransferase"/>
    <property type="match status" value="1"/>
</dbReference>
<dbReference type="FunFam" id="3.40.50.1370:FF:000012">
    <property type="entry name" value="Aspartate carbamoyltransferase"/>
    <property type="match status" value="1"/>
</dbReference>
<dbReference type="Gene3D" id="3.40.50.1370">
    <property type="entry name" value="Aspartate/ornithine carbamoyltransferase"/>
    <property type="match status" value="2"/>
</dbReference>
<dbReference type="HAMAP" id="MF_00001">
    <property type="entry name" value="Asp_carb_tr"/>
    <property type="match status" value="1"/>
</dbReference>
<dbReference type="InterPro" id="IPR006132">
    <property type="entry name" value="Asp/Orn_carbamoyltranf_P-bd"/>
</dbReference>
<dbReference type="InterPro" id="IPR006130">
    <property type="entry name" value="Asp/Orn_carbamoylTrfase"/>
</dbReference>
<dbReference type="InterPro" id="IPR036901">
    <property type="entry name" value="Asp/Orn_carbamoylTrfase_sf"/>
</dbReference>
<dbReference type="InterPro" id="IPR002082">
    <property type="entry name" value="Asp_carbamoyltransf"/>
</dbReference>
<dbReference type="InterPro" id="IPR006131">
    <property type="entry name" value="Asp_carbamoyltransf_Asp/Orn-bd"/>
</dbReference>
<dbReference type="NCBIfam" id="TIGR00670">
    <property type="entry name" value="asp_carb_tr"/>
    <property type="match status" value="1"/>
</dbReference>
<dbReference type="NCBIfam" id="NF002032">
    <property type="entry name" value="PRK00856.1"/>
    <property type="match status" value="1"/>
</dbReference>
<dbReference type="PANTHER" id="PTHR45753:SF6">
    <property type="entry name" value="ASPARTATE CARBAMOYLTRANSFERASE"/>
    <property type="match status" value="1"/>
</dbReference>
<dbReference type="PANTHER" id="PTHR45753">
    <property type="entry name" value="ORNITHINE CARBAMOYLTRANSFERASE, MITOCHONDRIAL"/>
    <property type="match status" value="1"/>
</dbReference>
<dbReference type="Pfam" id="PF00185">
    <property type="entry name" value="OTCace"/>
    <property type="match status" value="1"/>
</dbReference>
<dbReference type="Pfam" id="PF02729">
    <property type="entry name" value="OTCace_N"/>
    <property type="match status" value="1"/>
</dbReference>
<dbReference type="PRINTS" id="PR00100">
    <property type="entry name" value="AOTCASE"/>
</dbReference>
<dbReference type="PRINTS" id="PR00101">
    <property type="entry name" value="ATCASE"/>
</dbReference>
<dbReference type="SUPFAM" id="SSF53671">
    <property type="entry name" value="Aspartate/ornithine carbamoyltransferase"/>
    <property type="match status" value="1"/>
</dbReference>
<dbReference type="PROSITE" id="PS00097">
    <property type="entry name" value="CARBAMOYLTRANSFERASE"/>
    <property type="match status" value="1"/>
</dbReference>
<feature type="chain" id="PRO_0000113163" description="Aspartate carbamoyltransferase catalytic subunit">
    <location>
        <begin position="1"/>
        <end position="319"/>
    </location>
</feature>
<feature type="binding site" evidence="1">
    <location>
        <position position="57"/>
    </location>
    <ligand>
        <name>carbamoyl phosphate</name>
        <dbReference type="ChEBI" id="CHEBI:58228"/>
    </ligand>
</feature>
<feature type="binding site" evidence="1">
    <location>
        <position position="58"/>
    </location>
    <ligand>
        <name>carbamoyl phosphate</name>
        <dbReference type="ChEBI" id="CHEBI:58228"/>
    </ligand>
</feature>
<feature type="binding site" evidence="1">
    <location>
        <position position="85"/>
    </location>
    <ligand>
        <name>L-aspartate</name>
        <dbReference type="ChEBI" id="CHEBI:29991"/>
    </ligand>
</feature>
<feature type="binding site" evidence="1">
    <location>
        <position position="107"/>
    </location>
    <ligand>
        <name>carbamoyl phosphate</name>
        <dbReference type="ChEBI" id="CHEBI:58228"/>
    </ligand>
</feature>
<feature type="binding site" evidence="1">
    <location>
        <position position="140"/>
    </location>
    <ligand>
        <name>carbamoyl phosphate</name>
        <dbReference type="ChEBI" id="CHEBI:58228"/>
    </ligand>
</feature>
<feature type="binding site" evidence="1">
    <location>
        <position position="143"/>
    </location>
    <ligand>
        <name>carbamoyl phosphate</name>
        <dbReference type="ChEBI" id="CHEBI:58228"/>
    </ligand>
</feature>
<feature type="binding site" evidence="1">
    <location>
        <position position="173"/>
    </location>
    <ligand>
        <name>L-aspartate</name>
        <dbReference type="ChEBI" id="CHEBI:29991"/>
    </ligand>
</feature>
<feature type="binding site" evidence="1">
    <location>
        <position position="227"/>
    </location>
    <ligand>
        <name>L-aspartate</name>
        <dbReference type="ChEBI" id="CHEBI:29991"/>
    </ligand>
</feature>
<feature type="binding site" evidence="1">
    <location>
        <position position="268"/>
    </location>
    <ligand>
        <name>carbamoyl phosphate</name>
        <dbReference type="ChEBI" id="CHEBI:58228"/>
    </ligand>
</feature>
<feature type="binding site" evidence="1">
    <location>
        <position position="269"/>
    </location>
    <ligand>
        <name>carbamoyl phosphate</name>
        <dbReference type="ChEBI" id="CHEBI:58228"/>
    </ligand>
</feature>
<gene>
    <name evidence="1" type="primary">pyrB</name>
    <name type="ordered locus">Rv1380</name>
    <name type="ORF">MTCY02B12.14</name>
</gene>
<accession>P9WIT7</accession>
<accession>L0T981</accession>
<accession>P65613</accession>
<accession>P71808</accession>
<sequence length="319" mass="33819">MTPRHLLTAADLSRDDATAILDDADRFAQALVGRDIKKLPTLRGRTVVTMFYENSTRTRVSFEVAGKWMSADVINVSAAGSSVGKGESLRDTALTLRAAGADALIIRHPASGAAHLLAQWTGAHNDGPAVINAGDGTHEHPTQALLDALTIRQRLGGIEGRRIVIVGDILHSRVARSNVMLLDTLGAEVVLVAPPTLLPVGVTGWPATVSHDFDAELPAADAVLMLRVQAERMNGGFFPSVREYSVRYGLTERRQAMLPGHAVVLHPGPMVRGMEITSSVADSSQSAVLQQVSNGVQVRMAVLFHVLVGAQDAGKEGAA</sequence>
<protein>
    <recommendedName>
        <fullName evidence="1">Aspartate carbamoyltransferase catalytic subunit</fullName>
        <ecNumber evidence="1">2.1.3.2</ecNumber>
    </recommendedName>
    <alternativeName>
        <fullName evidence="1">Aspartate transcarbamylase</fullName>
        <shortName evidence="1">ATCase</shortName>
    </alternativeName>
</protein>
<name>PYRB_MYCTU</name>
<evidence type="ECO:0000255" key="1">
    <source>
        <dbReference type="HAMAP-Rule" id="MF_00001"/>
    </source>
</evidence>
<evidence type="ECO:0000305" key="2"/>
<reference key="1">
    <citation type="journal article" date="1998" name="Nature">
        <title>Deciphering the biology of Mycobacterium tuberculosis from the complete genome sequence.</title>
        <authorList>
            <person name="Cole S.T."/>
            <person name="Brosch R."/>
            <person name="Parkhill J."/>
            <person name="Garnier T."/>
            <person name="Churcher C.M."/>
            <person name="Harris D.E."/>
            <person name="Gordon S.V."/>
            <person name="Eiglmeier K."/>
            <person name="Gas S."/>
            <person name="Barry C.E. III"/>
            <person name="Tekaia F."/>
            <person name="Badcock K."/>
            <person name="Basham D."/>
            <person name="Brown D."/>
            <person name="Chillingworth T."/>
            <person name="Connor R."/>
            <person name="Davies R.M."/>
            <person name="Devlin K."/>
            <person name="Feltwell T."/>
            <person name="Gentles S."/>
            <person name="Hamlin N."/>
            <person name="Holroyd S."/>
            <person name="Hornsby T."/>
            <person name="Jagels K."/>
            <person name="Krogh A."/>
            <person name="McLean J."/>
            <person name="Moule S."/>
            <person name="Murphy L.D."/>
            <person name="Oliver S."/>
            <person name="Osborne J."/>
            <person name="Quail M.A."/>
            <person name="Rajandream M.A."/>
            <person name="Rogers J."/>
            <person name="Rutter S."/>
            <person name="Seeger K."/>
            <person name="Skelton S."/>
            <person name="Squares S."/>
            <person name="Squares R."/>
            <person name="Sulston J.E."/>
            <person name="Taylor K."/>
            <person name="Whitehead S."/>
            <person name="Barrell B.G."/>
        </authorList>
    </citation>
    <scope>NUCLEOTIDE SEQUENCE [LARGE SCALE GENOMIC DNA]</scope>
    <source>
        <strain>ATCC 25618 / H37Rv</strain>
    </source>
</reference>
<reference key="2">
    <citation type="journal article" date="2008" name="BMC Syst. Biol.">
        <title>targetTB: a target identification pipeline for Mycobacterium tuberculosis through an interactome, reactome and genome-scale structural analysis.</title>
        <authorList>
            <person name="Raman K."/>
            <person name="Yeturu K."/>
            <person name="Chandra N."/>
        </authorList>
    </citation>
    <scope>IDENTIFICATION AS A DRUG TARGET [LARGE SCALE ANALYSIS]</scope>
</reference>
<reference key="3">
    <citation type="journal article" date="2011" name="Mol. Cell. Proteomics">
        <title>Proteogenomic analysis of Mycobacterium tuberculosis by high resolution mass spectrometry.</title>
        <authorList>
            <person name="Kelkar D.S."/>
            <person name="Kumar D."/>
            <person name="Kumar P."/>
            <person name="Balakrishnan L."/>
            <person name="Muthusamy B."/>
            <person name="Yadav A.K."/>
            <person name="Shrivastava P."/>
            <person name="Marimuthu A."/>
            <person name="Anand S."/>
            <person name="Sundaram H."/>
            <person name="Kingsbury R."/>
            <person name="Harsha H.C."/>
            <person name="Nair B."/>
            <person name="Prasad T.S."/>
            <person name="Chauhan D.S."/>
            <person name="Katoch K."/>
            <person name="Katoch V.M."/>
            <person name="Kumar P."/>
            <person name="Chaerkady R."/>
            <person name="Ramachandran S."/>
            <person name="Dash D."/>
            <person name="Pandey A."/>
        </authorList>
    </citation>
    <scope>IDENTIFICATION BY MASS SPECTROMETRY [LARGE SCALE ANALYSIS]</scope>
    <source>
        <strain>ATCC 25618 / H37Rv</strain>
    </source>
</reference>
<comment type="function">
    <text evidence="1">Catalyzes the condensation of carbamoyl phosphate and aspartate to form carbamoyl aspartate and inorganic phosphate, the committed step in the de novo pyrimidine nucleotide biosynthesis pathway.</text>
</comment>
<comment type="catalytic activity">
    <reaction evidence="1">
        <text>carbamoyl phosphate + L-aspartate = N-carbamoyl-L-aspartate + phosphate + H(+)</text>
        <dbReference type="Rhea" id="RHEA:20013"/>
        <dbReference type="ChEBI" id="CHEBI:15378"/>
        <dbReference type="ChEBI" id="CHEBI:29991"/>
        <dbReference type="ChEBI" id="CHEBI:32814"/>
        <dbReference type="ChEBI" id="CHEBI:43474"/>
        <dbReference type="ChEBI" id="CHEBI:58228"/>
        <dbReference type="EC" id="2.1.3.2"/>
    </reaction>
</comment>
<comment type="pathway">
    <text evidence="1">Pyrimidine metabolism; UMP biosynthesis via de novo pathway; (S)-dihydroorotate from bicarbonate: step 2/3.</text>
</comment>
<comment type="subunit">
    <text evidence="1">Heterododecamer (2C3:3R2) of six catalytic PyrB chains organized as two trimers (C3), and six regulatory PyrI chains organized as three dimers (R2).</text>
</comment>
<comment type="miscellaneous">
    <text>Was identified as a high-confidence drug target.</text>
</comment>
<comment type="similarity">
    <text evidence="1 2">Belongs to the aspartate/ornithine carbamoyltransferase superfamily. ATCase family.</text>
</comment>
<proteinExistence type="evidence at protein level"/>